<protein>
    <recommendedName>
        <fullName>Protein FixU</fullName>
    </recommendedName>
</protein>
<accession>P42710</accession>
<evidence type="ECO:0000305" key="1"/>
<feature type="chain" id="PRO_0000087263" description="Protein FixU">
    <location>
        <begin position="1"/>
        <end position="70"/>
    </location>
</feature>
<name>FIXU_RHILT</name>
<sequence>MKAMIRRSGVGLSIYMSKKDVEEPVVAVENEDLWGGFILVRNGWLLGLPDLPQGTRLPITVEAMKQPDQD</sequence>
<gene>
    <name type="primary">fixU</name>
</gene>
<comment type="similarity">
    <text evidence="1">To K.pneumoniae and A.vinelandii NifT proteins and to the N-terminal of R.meliloti MosB protein.</text>
</comment>
<geneLocation type="plasmid">
    <name>sym pRtr843e</name>
</geneLocation>
<reference key="1">
    <citation type="journal article" date="1989" name="Mol. Microbiol.">
        <title>Molecular linkage of the nif/fix and nod gene regions in Rhizobium leguminosarum biovar trifolii.</title>
        <authorList>
            <person name="Iismaa S.E."/>
            <person name="Ealing P.M."/>
            <person name="Scott K.F."/>
            <person name="Watson J.M."/>
        </authorList>
    </citation>
    <scope>NUCLEOTIDE SEQUENCE [GENOMIC DNA]</scope>
    <source>
        <strain>ANU 843</strain>
    </source>
</reference>
<dbReference type="EMBL" id="X51963">
    <property type="protein sequence ID" value="CAB37405.1"/>
    <property type="molecule type" value="Genomic_DNA"/>
</dbReference>
<dbReference type="PIR" id="S09281">
    <property type="entry name" value="S09281"/>
</dbReference>
<dbReference type="SMR" id="P42710"/>
<dbReference type="GO" id="GO:0009399">
    <property type="term" value="P:nitrogen fixation"/>
    <property type="evidence" value="ECO:0007669"/>
    <property type="project" value="UniProtKB-KW"/>
</dbReference>
<dbReference type="Gene3D" id="2.40.50.240">
    <property type="entry name" value="NifT/FixU-like"/>
    <property type="match status" value="1"/>
</dbReference>
<dbReference type="InterPro" id="IPR009727">
    <property type="entry name" value="NifT"/>
</dbReference>
<dbReference type="InterPro" id="IPR024044">
    <property type="entry name" value="NifT/FixU_barrel-like_dom_sf"/>
</dbReference>
<dbReference type="NCBIfam" id="TIGR02934">
    <property type="entry name" value="nifT_nitrog"/>
    <property type="match status" value="1"/>
</dbReference>
<dbReference type="Pfam" id="PF06988">
    <property type="entry name" value="NifT"/>
    <property type="match status" value="1"/>
</dbReference>
<dbReference type="SUPFAM" id="SSF159203">
    <property type="entry name" value="NifT/FixU-like"/>
    <property type="match status" value="1"/>
</dbReference>
<proteinExistence type="predicted"/>
<organism>
    <name type="scientific">Rhizobium leguminosarum bv. trifolii</name>
    <dbReference type="NCBI Taxonomy" id="386"/>
    <lineage>
        <taxon>Bacteria</taxon>
        <taxon>Pseudomonadati</taxon>
        <taxon>Pseudomonadota</taxon>
        <taxon>Alphaproteobacteria</taxon>
        <taxon>Hyphomicrobiales</taxon>
        <taxon>Rhizobiaceae</taxon>
        <taxon>Rhizobium/Agrobacterium group</taxon>
        <taxon>Rhizobium</taxon>
    </lineage>
</organism>
<keyword id="KW-0535">Nitrogen fixation</keyword>
<keyword id="KW-0614">Plasmid</keyword>